<sequence>MIVNVIGAGLAGSEVAYNLGKRGIRVRLFEMRPKKMTEVHKTGYFAELVCSNSLKSEDITNAEGLLKAEMKLMGSITLEAAEKARVPSGKALAVDRNIFAKEVTEAIESLESVEVIREEVTEFDPEEGLWVVATGPATSDGLFSFLRNLLGDDFLFFFDAVSPIVTFESIDMEHAFWGDRFGKGKDYINCPLTDGEYEELWKALVEAEVIEMEDFDRKLLFERCQPIEEIARSGKDALRYGPLRPTGLVDPRTGKEPYAVVQLRREDKEGRFYSLVGFQTRLKWNEQKRVLRKIPCLRNAEIVRYGVMHRNVYINSPKLLDIFFRLKKQPNIFFAGQITGVEGYMESAASGIYVAYNVYRILKGLSPLKLPEETMMGALFSYIIEKVEGDLKPMYANFGLLPPLKTRVKDKFGKRKKLAERAIEAMRKFLEEYPW</sequence>
<organism>
    <name type="scientific">Thermotoga petrophila (strain ATCC BAA-488 / DSM 13995 / JCM 10881 / RKU-1)</name>
    <dbReference type="NCBI Taxonomy" id="390874"/>
    <lineage>
        <taxon>Bacteria</taxon>
        <taxon>Thermotogati</taxon>
        <taxon>Thermotogota</taxon>
        <taxon>Thermotogae</taxon>
        <taxon>Thermotogales</taxon>
        <taxon>Thermotogaceae</taxon>
        <taxon>Thermotoga</taxon>
    </lineage>
</organism>
<accession>A5IJ51</accession>
<comment type="function">
    <text evidence="1">Catalyzes the folate-dependent formation of 5-methyl-uridine at position 54 (M-5-U54) in all tRNAs.</text>
</comment>
<comment type="catalytic activity">
    <reaction evidence="1">
        <text>uridine(54) in tRNA + (6R)-5,10-methylene-5,6,7,8-tetrahydrofolate + NADH + H(+) = 5-methyluridine(54) in tRNA + (6S)-5,6,7,8-tetrahydrofolate + NAD(+)</text>
        <dbReference type="Rhea" id="RHEA:16873"/>
        <dbReference type="Rhea" id="RHEA-COMP:10167"/>
        <dbReference type="Rhea" id="RHEA-COMP:10193"/>
        <dbReference type="ChEBI" id="CHEBI:15378"/>
        <dbReference type="ChEBI" id="CHEBI:15636"/>
        <dbReference type="ChEBI" id="CHEBI:57453"/>
        <dbReference type="ChEBI" id="CHEBI:57540"/>
        <dbReference type="ChEBI" id="CHEBI:57945"/>
        <dbReference type="ChEBI" id="CHEBI:65315"/>
        <dbReference type="ChEBI" id="CHEBI:74447"/>
        <dbReference type="EC" id="2.1.1.74"/>
    </reaction>
</comment>
<comment type="catalytic activity">
    <reaction evidence="1">
        <text>uridine(54) in tRNA + (6R)-5,10-methylene-5,6,7,8-tetrahydrofolate + NADPH + H(+) = 5-methyluridine(54) in tRNA + (6S)-5,6,7,8-tetrahydrofolate + NADP(+)</text>
        <dbReference type="Rhea" id="RHEA:62372"/>
        <dbReference type="Rhea" id="RHEA-COMP:10167"/>
        <dbReference type="Rhea" id="RHEA-COMP:10193"/>
        <dbReference type="ChEBI" id="CHEBI:15378"/>
        <dbReference type="ChEBI" id="CHEBI:15636"/>
        <dbReference type="ChEBI" id="CHEBI:57453"/>
        <dbReference type="ChEBI" id="CHEBI:57783"/>
        <dbReference type="ChEBI" id="CHEBI:58349"/>
        <dbReference type="ChEBI" id="CHEBI:65315"/>
        <dbReference type="ChEBI" id="CHEBI:74447"/>
        <dbReference type="EC" id="2.1.1.74"/>
    </reaction>
</comment>
<comment type="cofactor">
    <cofactor evidence="1">
        <name>FAD</name>
        <dbReference type="ChEBI" id="CHEBI:57692"/>
    </cofactor>
</comment>
<comment type="subcellular location">
    <subcellularLocation>
        <location evidence="1">Cytoplasm</location>
    </subcellularLocation>
</comment>
<comment type="similarity">
    <text evidence="1">Belongs to the MnmG family. TrmFO subfamily.</text>
</comment>
<reference key="1">
    <citation type="submission" date="2007-05" db="EMBL/GenBank/DDBJ databases">
        <title>Complete sequence of Thermotoga petrophila RKU-1.</title>
        <authorList>
            <consortium name="US DOE Joint Genome Institute"/>
            <person name="Copeland A."/>
            <person name="Lucas S."/>
            <person name="Lapidus A."/>
            <person name="Barry K."/>
            <person name="Glavina del Rio T."/>
            <person name="Dalin E."/>
            <person name="Tice H."/>
            <person name="Pitluck S."/>
            <person name="Sims D."/>
            <person name="Brettin T."/>
            <person name="Bruce D."/>
            <person name="Detter J.C."/>
            <person name="Han C."/>
            <person name="Tapia R."/>
            <person name="Schmutz J."/>
            <person name="Larimer F."/>
            <person name="Land M."/>
            <person name="Hauser L."/>
            <person name="Kyrpides N."/>
            <person name="Mikhailova N."/>
            <person name="Nelson K."/>
            <person name="Gogarten J.P."/>
            <person name="Noll K."/>
            <person name="Richardson P."/>
        </authorList>
    </citation>
    <scope>NUCLEOTIDE SEQUENCE [LARGE SCALE GENOMIC DNA]</scope>
    <source>
        <strain>ATCC BAA-488 / DSM 13995 / JCM 10881 / RKU-1</strain>
    </source>
</reference>
<feature type="chain" id="PRO_0000346417" description="Methylenetetrahydrofolate--tRNA-(uracil-5-)-methyltransferase TrmFO">
    <location>
        <begin position="1"/>
        <end position="435"/>
    </location>
</feature>
<feature type="binding site" evidence="1">
    <location>
        <begin position="7"/>
        <end position="12"/>
    </location>
    <ligand>
        <name>FAD</name>
        <dbReference type="ChEBI" id="CHEBI:57692"/>
    </ligand>
</feature>
<name>TRMFO_THEP1</name>
<protein>
    <recommendedName>
        <fullName evidence="1">Methylenetetrahydrofolate--tRNA-(uracil-5-)-methyltransferase TrmFO</fullName>
        <ecNumber evidence="1">2.1.1.74</ecNumber>
    </recommendedName>
    <alternativeName>
        <fullName evidence="1">Folate-dependent tRNA (uracil-5-)-methyltransferase</fullName>
    </alternativeName>
    <alternativeName>
        <fullName evidence="1">Folate-dependent tRNA(M-5-U54)-methyltransferase</fullName>
    </alternativeName>
</protein>
<evidence type="ECO:0000255" key="1">
    <source>
        <dbReference type="HAMAP-Rule" id="MF_01037"/>
    </source>
</evidence>
<gene>
    <name evidence="1" type="primary">trmFO</name>
    <name type="ordered locus">Tpet_0195</name>
</gene>
<dbReference type="EC" id="2.1.1.74" evidence="1"/>
<dbReference type="EMBL" id="CP000702">
    <property type="protein sequence ID" value="ABQ46224.1"/>
    <property type="molecule type" value="Genomic_DNA"/>
</dbReference>
<dbReference type="RefSeq" id="WP_011942878.1">
    <property type="nucleotide sequence ID" value="NC_009486.1"/>
</dbReference>
<dbReference type="SMR" id="A5IJ51"/>
<dbReference type="STRING" id="390874.Tpet_0195"/>
<dbReference type="KEGG" id="tpt:Tpet_0195"/>
<dbReference type="eggNOG" id="COG1206">
    <property type="taxonomic scope" value="Bacteria"/>
</dbReference>
<dbReference type="HOGENOM" id="CLU_033057_1_0_0"/>
<dbReference type="Proteomes" id="UP000006558">
    <property type="component" value="Chromosome"/>
</dbReference>
<dbReference type="GO" id="GO:0005829">
    <property type="term" value="C:cytosol"/>
    <property type="evidence" value="ECO:0007669"/>
    <property type="project" value="TreeGrafter"/>
</dbReference>
<dbReference type="GO" id="GO:0050660">
    <property type="term" value="F:flavin adenine dinucleotide binding"/>
    <property type="evidence" value="ECO:0007669"/>
    <property type="project" value="UniProtKB-UniRule"/>
</dbReference>
<dbReference type="GO" id="GO:0047151">
    <property type="term" value="F:tRNA (uracil(54)-C5)-methyltransferase activity, 5,10-methylenetetrahydrofolate-dependent"/>
    <property type="evidence" value="ECO:0007669"/>
    <property type="project" value="UniProtKB-UniRule"/>
</dbReference>
<dbReference type="GO" id="GO:0030488">
    <property type="term" value="P:tRNA methylation"/>
    <property type="evidence" value="ECO:0007669"/>
    <property type="project" value="TreeGrafter"/>
</dbReference>
<dbReference type="GO" id="GO:0002098">
    <property type="term" value="P:tRNA wobble uridine modification"/>
    <property type="evidence" value="ECO:0007669"/>
    <property type="project" value="TreeGrafter"/>
</dbReference>
<dbReference type="FunFam" id="3.50.50.60:FF:000359">
    <property type="entry name" value="Methylenetetrahydrofolate--tRNA-(uracil-5-)-methyltransferase TrmFO"/>
    <property type="match status" value="1"/>
</dbReference>
<dbReference type="FunFam" id="3.50.50.60:FF:000412">
    <property type="entry name" value="Methylenetetrahydrofolate--tRNA-(uracil-5-)-methyltransferase TrmFO"/>
    <property type="match status" value="1"/>
</dbReference>
<dbReference type="Gene3D" id="3.50.50.60">
    <property type="entry name" value="FAD/NAD(P)-binding domain"/>
    <property type="match status" value="2"/>
</dbReference>
<dbReference type="HAMAP" id="MF_01037">
    <property type="entry name" value="TrmFO"/>
    <property type="match status" value="1"/>
</dbReference>
<dbReference type="InterPro" id="IPR036188">
    <property type="entry name" value="FAD/NAD-bd_sf"/>
</dbReference>
<dbReference type="InterPro" id="IPR002218">
    <property type="entry name" value="MnmG-rel"/>
</dbReference>
<dbReference type="InterPro" id="IPR040131">
    <property type="entry name" value="MnmG_N"/>
</dbReference>
<dbReference type="InterPro" id="IPR004417">
    <property type="entry name" value="TrmFO"/>
</dbReference>
<dbReference type="NCBIfam" id="TIGR00137">
    <property type="entry name" value="gid_trmFO"/>
    <property type="match status" value="1"/>
</dbReference>
<dbReference type="NCBIfam" id="NF003739">
    <property type="entry name" value="PRK05335.1"/>
    <property type="match status" value="1"/>
</dbReference>
<dbReference type="PANTHER" id="PTHR11806">
    <property type="entry name" value="GLUCOSE INHIBITED DIVISION PROTEIN A"/>
    <property type="match status" value="1"/>
</dbReference>
<dbReference type="PANTHER" id="PTHR11806:SF2">
    <property type="entry name" value="METHYLENETETRAHYDROFOLATE--TRNA-(URACIL-5-)-METHYLTRANSFERASE TRMFO"/>
    <property type="match status" value="1"/>
</dbReference>
<dbReference type="Pfam" id="PF01134">
    <property type="entry name" value="GIDA"/>
    <property type="match status" value="1"/>
</dbReference>
<dbReference type="SUPFAM" id="SSF51905">
    <property type="entry name" value="FAD/NAD(P)-binding domain"/>
    <property type="match status" value="1"/>
</dbReference>
<keyword id="KW-0963">Cytoplasm</keyword>
<keyword id="KW-0274">FAD</keyword>
<keyword id="KW-0285">Flavoprotein</keyword>
<keyword id="KW-0489">Methyltransferase</keyword>
<keyword id="KW-0520">NAD</keyword>
<keyword id="KW-0521">NADP</keyword>
<keyword id="KW-0808">Transferase</keyword>
<keyword id="KW-0819">tRNA processing</keyword>
<proteinExistence type="inferred from homology"/>